<organism>
    <name type="scientific">Candida albicans (strain SC5314 / ATCC MYA-2876)</name>
    <name type="common">Yeast</name>
    <dbReference type="NCBI Taxonomy" id="237561"/>
    <lineage>
        <taxon>Eukaryota</taxon>
        <taxon>Fungi</taxon>
        <taxon>Dikarya</taxon>
        <taxon>Ascomycota</taxon>
        <taxon>Saccharomycotina</taxon>
        <taxon>Pichiomycetes</taxon>
        <taxon>Debaryomycetaceae</taxon>
        <taxon>Candida/Lodderomyces clade</taxon>
        <taxon>Candida</taxon>
    </lineage>
</organism>
<name>3HAO_CANAL</name>
<accession>Q59K86</accession>
<accession>A0A1D8PSZ4</accession>
<reference key="1">
    <citation type="journal article" date="2004" name="Proc. Natl. Acad. Sci. U.S.A.">
        <title>The diploid genome sequence of Candida albicans.</title>
        <authorList>
            <person name="Jones T."/>
            <person name="Federspiel N.A."/>
            <person name="Chibana H."/>
            <person name="Dungan J."/>
            <person name="Kalman S."/>
            <person name="Magee B.B."/>
            <person name="Newport G."/>
            <person name="Thorstenson Y.R."/>
            <person name="Agabian N."/>
            <person name="Magee P.T."/>
            <person name="Davis R.W."/>
            <person name="Scherer S."/>
        </authorList>
    </citation>
    <scope>NUCLEOTIDE SEQUENCE [LARGE SCALE GENOMIC DNA]</scope>
    <source>
        <strain>SC5314 / ATCC MYA-2876</strain>
    </source>
</reference>
<reference key="2">
    <citation type="journal article" date="2007" name="Genome Biol.">
        <title>Assembly of the Candida albicans genome into sixteen supercontigs aligned on the eight chromosomes.</title>
        <authorList>
            <person name="van het Hoog M."/>
            <person name="Rast T.J."/>
            <person name="Martchenko M."/>
            <person name="Grindle S."/>
            <person name="Dignard D."/>
            <person name="Hogues H."/>
            <person name="Cuomo C."/>
            <person name="Berriman M."/>
            <person name="Scherer S."/>
            <person name="Magee B.B."/>
            <person name="Whiteway M."/>
            <person name="Chibana H."/>
            <person name="Nantel A."/>
            <person name="Magee P.T."/>
        </authorList>
    </citation>
    <scope>GENOME REANNOTATION</scope>
    <source>
        <strain>SC5314 / ATCC MYA-2876</strain>
    </source>
</reference>
<reference key="3">
    <citation type="journal article" date="2013" name="Genome Biol.">
        <title>Assembly of a phased diploid Candida albicans genome facilitates allele-specific measurements and provides a simple model for repeat and indel structure.</title>
        <authorList>
            <person name="Muzzey D."/>
            <person name="Schwartz K."/>
            <person name="Weissman J.S."/>
            <person name="Sherlock G."/>
        </authorList>
    </citation>
    <scope>NUCLEOTIDE SEQUENCE [LARGE SCALE GENOMIC DNA]</scope>
    <scope>GENOME REANNOTATION</scope>
    <source>
        <strain>SC5314 / ATCC MYA-2876</strain>
    </source>
</reference>
<dbReference type="EC" id="1.13.11.6" evidence="1"/>
<dbReference type="EMBL" id="CP017630">
    <property type="protein sequence ID" value="AOW31263.1"/>
    <property type="molecule type" value="Genomic_DNA"/>
</dbReference>
<dbReference type="RefSeq" id="XP_710160.1">
    <property type="nucleotide sequence ID" value="XM_705068.1"/>
</dbReference>
<dbReference type="SMR" id="Q59K86"/>
<dbReference type="FunCoup" id="Q59K86">
    <property type="interactions" value="165"/>
</dbReference>
<dbReference type="STRING" id="237561.Q59K86"/>
<dbReference type="EnsemblFungi" id="CR_05440W_A-T">
    <property type="protein sequence ID" value="CR_05440W_A-T-p1"/>
    <property type="gene ID" value="CR_05440W_A"/>
</dbReference>
<dbReference type="GeneID" id="3648245"/>
<dbReference type="KEGG" id="cal:CAALFM_CR05440WA"/>
<dbReference type="CGD" id="CAL0000184857">
    <property type="gene designation" value="orf19.3515"/>
</dbReference>
<dbReference type="VEuPathDB" id="FungiDB:CR_05440W_A"/>
<dbReference type="eggNOG" id="KOG3995">
    <property type="taxonomic scope" value="Eukaryota"/>
</dbReference>
<dbReference type="HOGENOM" id="CLU_095765_0_0_1"/>
<dbReference type="InParanoid" id="Q59K86"/>
<dbReference type="OMA" id="KPPVGNQ"/>
<dbReference type="OrthoDB" id="204928at2759"/>
<dbReference type="UniPathway" id="UPA00253">
    <property type="reaction ID" value="UER00330"/>
</dbReference>
<dbReference type="Proteomes" id="UP000000559">
    <property type="component" value="Chromosome R"/>
</dbReference>
<dbReference type="GO" id="GO:0005737">
    <property type="term" value="C:cytoplasm"/>
    <property type="evidence" value="ECO:0000318"/>
    <property type="project" value="GO_Central"/>
</dbReference>
<dbReference type="GO" id="GO:0000334">
    <property type="term" value="F:3-hydroxyanthranilate 3,4-dioxygenase activity"/>
    <property type="evidence" value="ECO:0000247"/>
    <property type="project" value="CGD"/>
</dbReference>
<dbReference type="GO" id="GO:0008198">
    <property type="term" value="F:ferrous iron binding"/>
    <property type="evidence" value="ECO:0007669"/>
    <property type="project" value="UniProtKB-UniRule"/>
</dbReference>
<dbReference type="GO" id="GO:0034354">
    <property type="term" value="P:'de novo' NAD biosynthetic process from L-tryptophan"/>
    <property type="evidence" value="ECO:0000247"/>
    <property type="project" value="CGD"/>
</dbReference>
<dbReference type="GO" id="GO:0043420">
    <property type="term" value="P:anthranilate metabolic process"/>
    <property type="evidence" value="ECO:0007669"/>
    <property type="project" value="UniProtKB-UniRule"/>
</dbReference>
<dbReference type="GO" id="GO:0006569">
    <property type="term" value="P:L-tryptophan catabolic process"/>
    <property type="evidence" value="ECO:0007669"/>
    <property type="project" value="UniProtKB-UniRule"/>
</dbReference>
<dbReference type="GO" id="GO:0019805">
    <property type="term" value="P:quinolinate biosynthetic process"/>
    <property type="evidence" value="ECO:0007669"/>
    <property type="project" value="UniProtKB-UniRule"/>
</dbReference>
<dbReference type="GO" id="GO:0046874">
    <property type="term" value="P:quinolinate metabolic process"/>
    <property type="evidence" value="ECO:0000318"/>
    <property type="project" value="GO_Central"/>
</dbReference>
<dbReference type="CDD" id="cd06123">
    <property type="entry name" value="cupin_HAO"/>
    <property type="match status" value="1"/>
</dbReference>
<dbReference type="FunFam" id="2.60.120.10:FF:000093">
    <property type="entry name" value="3-hydroxyanthranilate 3,4-dioxygenase"/>
    <property type="match status" value="1"/>
</dbReference>
<dbReference type="Gene3D" id="2.60.120.10">
    <property type="entry name" value="Jelly Rolls"/>
    <property type="match status" value="1"/>
</dbReference>
<dbReference type="HAMAP" id="MF_00825">
    <property type="entry name" value="3_HAO"/>
    <property type="match status" value="1"/>
</dbReference>
<dbReference type="InterPro" id="IPR010329">
    <property type="entry name" value="3hydroanth_dOase"/>
</dbReference>
<dbReference type="InterPro" id="IPR014710">
    <property type="entry name" value="RmlC-like_jellyroll"/>
</dbReference>
<dbReference type="InterPro" id="IPR011051">
    <property type="entry name" value="RmlC_Cupin_sf"/>
</dbReference>
<dbReference type="NCBIfam" id="TIGR03037">
    <property type="entry name" value="anthran_nbaC"/>
    <property type="match status" value="1"/>
</dbReference>
<dbReference type="PANTHER" id="PTHR15497">
    <property type="entry name" value="3-HYDROXYANTHRANILATE 3,4-DIOXYGENASE"/>
    <property type="match status" value="1"/>
</dbReference>
<dbReference type="PANTHER" id="PTHR15497:SF1">
    <property type="entry name" value="3-HYDROXYANTHRANILATE 3,4-DIOXYGENASE"/>
    <property type="match status" value="1"/>
</dbReference>
<dbReference type="Pfam" id="PF06052">
    <property type="entry name" value="3-HAO"/>
    <property type="match status" value="1"/>
</dbReference>
<dbReference type="SUPFAM" id="SSF51182">
    <property type="entry name" value="RmlC-like cupins"/>
    <property type="match status" value="1"/>
</dbReference>
<protein>
    <recommendedName>
        <fullName evidence="1">3-hydroxyanthranilate 3,4-dioxygenase</fullName>
        <ecNumber evidence="1">1.13.11.6</ecNumber>
    </recommendedName>
    <alternativeName>
        <fullName evidence="1">3-hydroxyanthranilate oxygenase</fullName>
        <shortName evidence="1">3-HAO</shortName>
    </alternativeName>
    <alternativeName>
        <fullName evidence="1">3-hydroxyanthranilic acid dioxygenase</fullName>
        <shortName evidence="1">HAD</shortName>
    </alternativeName>
    <alternativeName>
        <fullName evidence="1">Biosynthesis of nicotinic acid protein 1</fullName>
    </alternativeName>
</protein>
<gene>
    <name evidence="1" type="primary">BNA1</name>
    <name type="ordered locus">CAALFM_CR05440WA</name>
    <name type="ORF">CaO19.3515</name>
</gene>
<comment type="function">
    <text evidence="1">Catalyzes the oxidative ring opening of 3-hydroxyanthranilate to 2-amino-3-carboxymuconate semialdehyde, which spontaneously cyclizes to quinolinate.</text>
</comment>
<comment type="catalytic activity">
    <reaction evidence="1">
        <text>3-hydroxyanthranilate + O2 = (2Z,4Z)-2-amino-3-carboxymuconate 6-semialdehyde</text>
        <dbReference type="Rhea" id="RHEA:17953"/>
        <dbReference type="ChEBI" id="CHEBI:15379"/>
        <dbReference type="ChEBI" id="CHEBI:36559"/>
        <dbReference type="ChEBI" id="CHEBI:77612"/>
        <dbReference type="EC" id="1.13.11.6"/>
    </reaction>
</comment>
<comment type="cofactor">
    <cofactor evidence="1">
        <name>Fe(2+)</name>
        <dbReference type="ChEBI" id="CHEBI:29033"/>
    </cofactor>
</comment>
<comment type="pathway">
    <text evidence="1">Cofactor biosynthesis; NAD(+) biosynthesis; quinolinate from L-kynurenine: step 3/3.</text>
</comment>
<comment type="subcellular location">
    <subcellularLocation>
        <location evidence="1">Cytoplasm</location>
    </subcellularLocation>
</comment>
<comment type="similarity">
    <text evidence="1">Belongs to the 3-HAO family.</text>
</comment>
<feature type="chain" id="PRO_0000361984" description="3-hydroxyanthranilate 3,4-dioxygenase">
    <location>
        <begin position="1"/>
        <end position="171"/>
    </location>
</feature>
<feature type="binding site" evidence="1">
    <location>
        <position position="45"/>
    </location>
    <ligand>
        <name>O2</name>
        <dbReference type="ChEBI" id="CHEBI:15379"/>
    </ligand>
</feature>
<feature type="binding site" evidence="1">
    <location>
        <position position="49"/>
    </location>
    <ligand>
        <name>Fe cation</name>
        <dbReference type="ChEBI" id="CHEBI:24875"/>
        <note>catalytic</note>
    </ligand>
</feature>
<feature type="binding site" evidence="1">
    <location>
        <position position="55"/>
    </location>
    <ligand>
        <name>Fe cation</name>
        <dbReference type="ChEBI" id="CHEBI:24875"/>
        <note>catalytic</note>
    </ligand>
</feature>
<feature type="binding site" evidence="1">
    <location>
        <position position="55"/>
    </location>
    <ligand>
        <name>substrate</name>
    </ligand>
</feature>
<feature type="binding site" evidence="1">
    <location>
        <position position="93"/>
    </location>
    <ligand>
        <name>Fe cation</name>
        <dbReference type="ChEBI" id="CHEBI:24875"/>
        <note>catalytic</note>
    </ligand>
</feature>
<feature type="binding site" evidence="1">
    <location>
        <position position="97"/>
    </location>
    <ligand>
        <name>substrate</name>
    </ligand>
</feature>
<feature type="binding site" evidence="1">
    <location>
        <position position="107"/>
    </location>
    <ligand>
        <name>substrate</name>
    </ligand>
</feature>
<feature type="binding site" evidence="1">
    <location>
        <position position="122"/>
    </location>
    <ligand>
        <name>a divalent metal cation</name>
        <dbReference type="ChEBI" id="CHEBI:60240"/>
    </ligand>
</feature>
<feature type="binding site" evidence="1">
    <location>
        <position position="125"/>
    </location>
    <ligand>
        <name>a divalent metal cation</name>
        <dbReference type="ChEBI" id="CHEBI:60240"/>
    </ligand>
</feature>
<feature type="binding site" evidence="1">
    <location>
        <position position="159"/>
    </location>
    <ligand>
        <name>a divalent metal cation</name>
        <dbReference type="ChEBI" id="CHEBI:60240"/>
    </ligand>
</feature>
<feature type="binding site" evidence="1">
    <location>
        <position position="162"/>
    </location>
    <ligand>
        <name>a divalent metal cation</name>
        <dbReference type="ChEBI" id="CHEBI:60240"/>
    </ligand>
</feature>
<proteinExistence type="inferred from homology"/>
<keyword id="KW-0963">Cytoplasm</keyword>
<keyword id="KW-0223">Dioxygenase</keyword>
<keyword id="KW-0408">Iron</keyword>
<keyword id="KW-0479">Metal-binding</keyword>
<keyword id="KW-0560">Oxidoreductase</keyword>
<keyword id="KW-0662">Pyridine nucleotide biosynthesis</keyword>
<keyword id="KW-1185">Reference proteome</keyword>
<sequence length="171" mass="19545">MVLGQPINIIKWIEENGDLLKPPVNNFCLHRGGFTIMIVGGPNERSDYHINQTPEYFYQFKGTMCLKVVDDGEFKDIFINEGDSFLLPPNVPHNPCRYENTIGIVVEQDRPAGVNDKVRWYCQKCQTVIHEVEFYLTDLGTQIKEAIVKFDADLDARTCKNCGTVNSSRRD</sequence>
<evidence type="ECO:0000255" key="1">
    <source>
        <dbReference type="HAMAP-Rule" id="MF_03019"/>
    </source>
</evidence>